<proteinExistence type="evidence at protein level"/>
<gene>
    <name evidence="6" type="primary">DYNLT2B</name>
    <name evidence="4" type="synonym">TCTEX1D2</name>
</gene>
<accession>Q8WW35</accession>
<accession>A6NCN5</accession>
<comment type="function">
    <text evidence="2 3">Acts as one of several non-catalytic accessory components of the cytoplasmic dynein 2 complex (dynein-2 complex), a motor protein complex that drives the movement of cargos along microtubules within cilia and flagella in concert with the intraflagellar transport (IFT) system. Required for proper retrograde ciliary transport.</text>
</comment>
<comment type="subunit">
    <text evidence="1 2 3">Light chain of the cytoplasmic dynein complex 2, a multisubunit complex composed at least of eleven different proteins (PubMed:25205765, PubMed:26044572). The cytoplasmic dynein 2 complex consists of two catalytic heavy chains (HCs) and a number of non-catalytic subunits presented by intermediate chains (ICs), light intermediate chains (LICs) and light chains (LCs). Among them, a heavy chain (DYNC2H1), two intermediate chains (DYNC2I2 and DYNC2I1), a light intermediate chain (DYNC2LI1), and a light chain (DYNLT2B) are unique to the dynein-2 complex, but a subset of the light chains are also shared by dynein-1 and dynein-2 complexes (PubMed:25205765, PubMed:26044572). Interacts with DYNC2I1 (PubMed:26044572). The dimer DYNLT2B-DYNLT1/DYNLT3 interacts with DYNC2I1; this interaction is crucial for retrograde trafficking of ciliary proteins (PubMed:26044572, PubMed:29742051).</text>
</comment>
<comment type="interaction">
    <interactant intactId="EBI-2692044">
        <id>Q8WW35</id>
    </interactant>
    <interactant intactId="EBI-77797">
        <id>P35609</id>
        <label>ACTN2</label>
    </interactant>
    <organismsDiffer>false</organismsDiffer>
    <experiments>3</experiments>
</comment>
<comment type="interaction">
    <interactant intactId="EBI-2692044">
        <id>Q8WW35</id>
    </interactant>
    <interactant intactId="EBI-745859">
        <id>P55273</id>
        <label>CDKN2D</label>
    </interactant>
    <organismsDiffer>false</organismsDiffer>
    <experiments>3</experiments>
</comment>
<comment type="interaction">
    <interactant intactId="EBI-2692044">
        <id>Q8WW35</id>
    </interactant>
    <interactant intactId="EBI-1176455">
        <id>P63172</id>
        <label>DYNLT1</label>
    </interactant>
    <organismsDiffer>false</organismsDiffer>
    <experiments>6</experiments>
</comment>
<comment type="interaction">
    <interactant intactId="EBI-2692044">
        <id>Q8WW35</id>
    </interactant>
    <interactant intactId="EBI-1030560">
        <id>P13984</id>
        <label>GTF2F2</label>
    </interactant>
    <organismsDiffer>false</organismsDiffer>
    <experiments>2</experiments>
</comment>
<comment type="subcellular location">
    <subcellularLocation>
        <location evidence="5">Dynein axonemal particle</location>
    </subcellularLocation>
</comment>
<comment type="disease" evidence="2">
    <disease id="DI-04957">
        <name>Short-rib thoracic dysplasia 17 with or without polydactyly</name>
        <acronym>SRTD17</acronym>
        <description>A form of short-rib thoracic dysplasia, a group of autosomal recessive ciliopathies that are characterized by a constricted thoracic cage, short ribs, shortened tubular bones, and a 'trident' appearance of the acetabular roof. Polydactyly is variably present. Non-skeletal involvement can include cleft lip/palate as well as anomalies of major organs such as the brain, eye, heart, kidneys, liver, pancreas, intestines, and genitalia. Some forms of the disease are lethal in the neonatal period due to respiratory insufficiency secondary to a severely restricted thoracic cage, whereas others are compatible with life. Disease spectrum encompasses Ellis-van Creveld syndrome, asphyxiating thoracic dystrophy (Jeune syndrome), Mainzer-Saldino syndrome, and short rib-polydactyly syndrome.</description>
        <dbReference type="MIM" id="617405"/>
    </disease>
    <text>The disease is caused by variants affecting the gene represented in this entry.</text>
</comment>
<comment type="similarity">
    <text evidence="5">Belongs to the dynein light chain Tctex-type family.</text>
</comment>
<reference key="1">
    <citation type="journal article" date="2006" name="Nature">
        <title>The DNA sequence, annotation and analysis of human chromosome 3.</title>
        <authorList>
            <person name="Muzny D.M."/>
            <person name="Scherer S.E."/>
            <person name="Kaul R."/>
            <person name="Wang J."/>
            <person name="Yu J."/>
            <person name="Sudbrak R."/>
            <person name="Buhay C.J."/>
            <person name="Chen R."/>
            <person name="Cree A."/>
            <person name="Ding Y."/>
            <person name="Dugan-Rocha S."/>
            <person name="Gill R."/>
            <person name="Gunaratne P."/>
            <person name="Harris R.A."/>
            <person name="Hawes A.C."/>
            <person name="Hernandez J."/>
            <person name="Hodgson A.V."/>
            <person name="Hume J."/>
            <person name="Jackson A."/>
            <person name="Khan Z.M."/>
            <person name="Kovar-Smith C."/>
            <person name="Lewis L.R."/>
            <person name="Lozado R.J."/>
            <person name="Metzker M.L."/>
            <person name="Milosavljevic A."/>
            <person name="Miner G.R."/>
            <person name="Morgan M.B."/>
            <person name="Nazareth L.V."/>
            <person name="Scott G."/>
            <person name="Sodergren E."/>
            <person name="Song X.-Z."/>
            <person name="Steffen D."/>
            <person name="Wei S."/>
            <person name="Wheeler D.A."/>
            <person name="Wright M.W."/>
            <person name="Worley K.C."/>
            <person name="Yuan Y."/>
            <person name="Zhang Z."/>
            <person name="Adams C.Q."/>
            <person name="Ansari-Lari M.A."/>
            <person name="Ayele M."/>
            <person name="Brown M.J."/>
            <person name="Chen G."/>
            <person name="Chen Z."/>
            <person name="Clendenning J."/>
            <person name="Clerc-Blankenburg K.P."/>
            <person name="Chen R."/>
            <person name="Chen Z."/>
            <person name="Davis C."/>
            <person name="Delgado O."/>
            <person name="Dinh H.H."/>
            <person name="Dong W."/>
            <person name="Draper H."/>
            <person name="Ernst S."/>
            <person name="Fu G."/>
            <person name="Gonzalez-Garay M.L."/>
            <person name="Garcia D.K."/>
            <person name="Gillett W."/>
            <person name="Gu J."/>
            <person name="Hao B."/>
            <person name="Haugen E."/>
            <person name="Havlak P."/>
            <person name="He X."/>
            <person name="Hennig S."/>
            <person name="Hu S."/>
            <person name="Huang W."/>
            <person name="Jackson L.R."/>
            <person name="Jacob L.S."/>
            <person name="Kelly S.H."/>
            <person name="Kube M."/>
            <person name="Levy R."/>
            <person name="Li Z."/>
            <person name="Liu B."/>
            <person name="Liu J."/>
            <person name="Liu W."/>
            <person name="Lu J."/>
            <person name="Maheshwari M."/>
            <person name="Nguyen B.-V."/>
            <person name="Okwuonu G.O."/>
            <person name="Palmeiri A."/>
            <person name="Pasternak S."/>
            <person name="Perez L.M."/>
            <person name="Phelps K.A."/>
            <person name="Plopper F.J."/>
            <person name="Qiang B."/>
            <person name="Raymond C."/>
            <person name="Rodriguez R."/>
            <person name="Saenphimmachak C."/>
            <person name="Santibanez J."/>
            <person name="Shen H."/>
            <person name="Shen Y."/>
            <person name="Subramanian S."/>
            <person name="Tabor P.E."/>
            <person name="Verduzco D."/>
            <person name="Waldron L."/>
            <person name="Wang J."/>
            <person name="Wang J."/>
            <person name="Wang Q."/>
            <person name="Williams G.A."/>
            <person name="Wong G.K.-S."/>
            <person name="Yao Z."/>
            <person name="Zhang J."/>
            <person name="Zhang X."/>
            <person name="Zhao G."/>
            <person name="Zhou J."/>
            <person name="Zhou Y."/>
            <person name="Nelson D."/>
            <person name="Lehrach H."/>
            <person name="Reinhardt R."/>
            <person name="Naylor S.L."/>
            <person name="Yang H."/>
            <person name="Olson M."/>
            <person name="Weinstock G."/>
            <person name="Gibbs R.A."/>
        </authorList>
    </citation>
    <scope>NUCLEOTIDE SEQUENCE [LARGE SCALE GENOMIC DNA]</scope>
</reference>
<reference key="2">
    <citation type="journal article" date="2004" name="Genome Res.">
        <title>The status, quality, and expansion of the NIH full-length cDNA project: the Mammalian Gene Collection (MGC).</title>
        <authorList>
            <consortium name="The MGC Project Team"/>
        </authorList>
    </citation>
    <scope>NUCLEOTIDE SEQUENCE [LARGE SCALE MRNA]</scope>
    <source>
        <tissue>Testis</tissue>
    </source>
</reference>
<reference key="3">
    <citation type="journal article" date="2014" name="J. Cell Sci.">
        <title>Subunit composition of the human cytoplasmic dynein-2 complex.</title>
        <authorList>
            <person name="Asante D."/>
            <person name="Stevenson N.L."/>
            <person name="Stephens D.J."/>
        </authorList>
    </citation>
    <scope>IDENTIFICATION IN THE CYTOPLASMIC DYNEIN 2 COMPLEX</scope>
    <scope>SUBUNIT</scope>
</reference>
<reference key="4">
    <citation type="journal article" date="2015" name="Nat. Commun.">
        <title>TCTEX1D2 mutations underlie Jeune asphyxiating thoracic dystrophy with impaired retrograde intraflagellar transport.</title>
        <authorList>
            <consortium name="UK10K"/>
            <person name="Schmidts M."/>
            <person name="Hou Y."/>
            <person name="Cortes C.R."/>
            <person name="Mans D.A."/>
            <person name="Huber C."/>
            <person name="Boldt K."/>
            <person name="Patel M."/>
            <person name="van Reeuwijk J."/>
            <person name="Plaza J.M."/>
            <person name="van Beersum S.E."/>
            <person name="Yap Z.M."/>
            <person name="Letteboer S.J."/>
            <person name="Taylor S.P."/>
            <person name="Herridge W."/>
            <person name="Johnson C.A."/>
            <person name="Scambler P.J."/>
            <person name="Ueffing M."/>
            <person name="Kayserili H."/>
            <person name="Krakow D."/>
            <person name="King S.M."/>
            <person name="Beales P.L."/>
            <person name="Al-Gazali L."/>
            <person name="Wicking C."/>
            <person name="Cormier-Daire V."/>
            <person name="Roepman R."/>
            <person name="Mitchison H.M."/>
            <person name="Witman G.B."/>
        </authorList>
    </citation>
    <scope>FUNCTION</scope>
    <scope>INTERACTION WITH DYNC2I1</scope>
    <scope>INVOLVEMENT IN SRTD17</scope>
    <scope>VARIANT SRTD17 88-ARG--TYR-142 DEL</scope>
    <scope>SUBUNIT</scope>
</reference>
<reference key="5">
    <citation type="journal article" date="2016" name="Nat. Commun.">
        <authorList>
            <consortium name="UK10K"/>
            <person name="Schmidts M."/>
            <person name="Hou Y."/>
            <person name="Cortes C.R."/>
            <person name="Mans D.A."/>
            <person name="Huber C."/>
            <person name="Boldt K."/>
            <person name="Patel M."/>
            <person name="van Reeuwijk J."/>
            <person name="Plaza J.M."/>
            <person name="van Beersum S.E."/>
            <person name="Yap Z.M."/>
            <person name="Letteboer S.J."/>
            <person name="Taylor S.P."/>
            <person name="Herridge W."/>
            <person name="Johnson C.A."/>
            <person name="Scambler P.J."/>
            <person name="Ueffing M."/>
            <person name="Kayserili H."/>
            <person name="Krakow D."/>
            <person name="King S.M."/>
            <person name="Beales P.L."/>
            <person name="Al-Gazali L."/>
            <person name="Wicking C."/>
            <person name="Cormier-Daire V."/>
            <person name="Roepman R."/>
            <person name="Mitchison H.M."/>
            <person name="Witman G.B."/>
        </authorList>
    </citation>
    <scope>ERRATUM OF PUBMED:26044572</scope>
</reference>
<reference key="6">
    <citation type="journal article" date="2018" name="Mol. Biol. Cell">
        <title>Interaction of WDR60 intermediate chain with TCTEX1D2 light chain of the dynein-2 complex is crucial for ciliary protein trafficking.</title>
        <authorList>
            <person name="Hamada Y."/>
            <person name="Tsurumi Y."/>
            <person name="Nozaki S."/>
            <person name="Katoh Y."/>
            <person name="Nakayama K."/>
        </authorList>
    </citation>
    <scope>SUBUNIT</scope>
    <scope>FUNCTION</scope>
    <scope>INTERACTION WITH DYNC2I1</scope>
</reference>
<evidence type="ECO:0000269" key="1">
    <source>
    </source>
</evidence>
<evidence type="ECO:0000269" key="2">
    <source>
    </source>
</evidence>
<evidence type="ECO:0000269" key="3">
    <source>
    </source>
</evidence>
<evidence type="ECO:0000303" key="4">
    <source>
    </source>
</evidence>
<evidence type="ECO:0000305" key="5"/>
<evidence type="ECO:0000312" key="6">
    <source>
        <dbReference type="HGNC" id="HGNC:28482"/>
    </source>
</evidence>
<evidence type="ECO:0007829" key="7">
    <source>
        <dbReference type="PDB" id="8RGI"/>
    </source>
</evidence>
<protein>
    <recommendedName>
        <fullName evidence="5">Dynein light chain Tctex-type protein 2B</fullName>
    </recommendedName>
    <alternativeName>
        <fullName>Tctex1 domain-containing protein 2</fullName>
    </alternativeName>
</protein>
<name>DYT2B_HUMAN</name>
<sequence length="142" mass="16122">MATSIGVSFSVGDGVPEAEKNAGEPENTYILRPVFQQRFRPSVVKDCIHAVLKEELANAEYSPEEMPQLTKHLSENIKDKLKEMGFDRYKMVVQVVIGEQRGEGVFMASRCFWDADTDNYTHDVFMNDSLFCVVAAFGCFYY</sequence>
<dbReference type="EMBL" id="AC069257">
    <property type="status" value="NOT_ANNOTATED_CDS"/>
    <property type="molecule type" value="Genomic_DNA"/>
</dbReference>
<dbReference type="EMBL" id="BC021177">
    <property type="protein sequence ID" value="AAH21177.1"/>
    <property type="molecule type" value="mRNA"/>
</dbReference>
<dbReference type="CCDS" id="CCDS33929.1"/>
<dbReference type="RefSeq" id="NP_689986.2">
    <property type="nucleotide sequence ID" value="NM_152773.5"/>
</dbReference>
<dbReference type="PDB" id="8J07">
    <property type="method" value="EM"/>
    <property type="resolution" value="4.10 A"/>
    <property type="chains" value="l7/n7/p7/r7=1-142"/>
</dbReference>
<dbReference type="PDB" id="8RGI">
    <property type="method" value="X-ray"/>
    <property type="resolution" value="2.02 A"/>
    <property type="chains" value="B=2-142"/>
</dbReference>
<dbReference type="PDBsum" id="8J07"/>
<dbReference type="PDBsum" id="8RGI"/>
<dbReference type="EMDB" id="EMD-35888"/>
<dbReference type="SMR" id="Q8WW35"/>
<dbReference type="BioGRID" id="129118">
    <property type="interactions" value="38"/>
</dbReference>
<dbReference type="CORUM" id="Q8WW35"/>
<dbReference type="FunCoup" id="Q8WW35">
    <property type="interactions" value="227"/>
</dbReference>
<dbReference type="IntAct" id="Q8WW35">
    <property type="interactions" value="33"/>
</dbReference>
<dbReference type="MINT" id="Q8WW35"/>
<dbReference type="STRING" id="9606.ENSP00000324323"/>
<dbReference type="iPTMnet" id="Q8WW35"/>
<dbReference type="PhosphoSitePlus" id="Q8WW35"/>
<dbReference type="BioMuta" id="TCTEX1D2"/>
<dbReference type="DMDM" id="166987400"/>
<dbReference type="jPOST" id="Q8WW35"/>
<dbReference type="MassIVE" id="Q8WW35"/>
<dbReference type="PaxDb" id="9606-ENSP00000324323"/>
<dbReference type="PeptideAtlas" id="Q8WW35"/>
<dbReference type="ProteomicsDB" id="74856"/>
<dbReference type="Pumba" id="Q8WW35"/>
<dbReference type="Antibodypedia" id="53889">
    <property type="antibodies" value="58 antibodies from 18 providers"/>
</dbReference>
<dbReference type="DNASU" id="255758"/>
<dbReference type="Ensembl" id="ENST00000325318.10">
    <property type="protein sequence ID" value="ENSP00000324323.5"/>
    <property type="gene ID" value="ENSG00000213123.11"/>
</dbReference>
<dbReference type="GeneID" id="255758"/>
<dbReference type="KEGG" id="hsa:255758"/>
<dbReference type="MANE-Select" id="ENST00000325318.10">
    <property type="protein sequence ID" value="ENSP00000324323.5"/>
    <property type="RefSeq nucleotide sequence ID" value="NM_152773.5"/>
    <property type="RefSeq protein sequence ID" value="NP_689986.2"/>
</dbReference>
<dbReference type="UCSC" id="uc003fwi.4">
    <property type="organism name" value="human"/>
</dbReference>
<dbReference type="AGR" id="HGNC:28482"/>
<dbReference type="CTD" id="255758"/>
<dbReference type="DisGeNET" id="255758"/>
<dbReference type="GeneCards" id="DYNLT2B"/>
<dbReference type="HGNC" id="HGNC:28482">
    <property type="gene designation" value="DYNLT2B"/>
</dbReference>
<dbReference type="HPA" id="ENSG00000213123">
    <property type="expression patterns" value="Low tissue specificity"/>
</dbReference>
<dbReference type="MalaCards" id="DYNLT2B"/>
<dbReference type="MIM" id="617353">
    <property type="type" value="gene"/>
</dbReference>
<dbReference type="MIM" id="617405">
    <property type="type" value="phenotype"/>
</dbReference>
<dbReference type="neXtProt" id="NX_Q8WW35"/>
<dbReference type="OpenTargets" id="ENSG00000213123"/>
<dbReference type="VEuPathDB" id="HostDB:ENSG00000213123"/>
<dbReference type="eggNOG" id="KOG4108">
    <property type="taxonomic scope" value="Eukaryota"/>
</dbReference>
<dbReference type="GeneTree" id="ENSGT00940000160019"/>
<dbReference type="HOGENOM" id="CLU_097204_8_0_1"/>
<dbReference type="InParanoid" id="Q8WW35"/>
<dbReference type="OMA" id="YVIRPNF"/>
<dbReference type="OrthoDB" id="10260741at2759"/>
<dbReference type="PAN-GO" id="Q8WW35">
    <property type="GO annotations" value="4 GO annotations based on evolutionary models"/>
</dbReference>
<dbReference type="PhylomeDB" id="Q8WW35"/>
<dbReference type="TreeFam" id="TF313904"/>
<dbReference type="PathwayCommons" id="Q8WW35"/>
<dbReference type="Reactome" id="R-HSA-5620924">
    <property type="pathway name" value="Intraflagellar transport"/>
</dbReference>
<dbReference type="SignaLink" id="Q8WW35"/>
<dbReference type="BioGRID-ORCS" id="255758">
    <property type="hits" value="17 hits in 1123 CRISPR screens"/>
</dbReference>
<dbReference type="ChiTaRS" id="TCTEX1D2">
    <property type="organism name" value="human"/>
</dbReference>
<dbReference type="GenomeRNAi" id="255758"/>
<dbReference type="Pharos" id="Q8WW35">
    <property type="development level" value="Tbio"/>
</dbReference>
<dbReference type="PRO" id="PR:Q8WW35"/>
<dbReference type="Proteomes" id="UP000005640">
    <property type="component" value="Chromosome 3"/>
</dbReference>
<dbReference type="RNAct" id="Q8WW35">
    <property type="molecule type" value="protein"/>
</dbReference>
<dbReference type="Bgee" id="ENSG00000213123">
    <property type="expression patterns" value="Expressed in right uterine tube and 97 other cell types or tissues"/>
</dbReference>
<dbReference type="ExpressionAtlas" id="Q8WW35">
    <property type="expression patterns" value="baseline and differential"/>
</dbReference>
<dbReference type="GO" id="GO:0005929">
    <property type="term" value="C:cilium"/>
    <property type="evidence" value="ECO:0007669"/>
    <property type="project" value="GOC"/>
</dbReference>
<dbReference type="GO" id="GO:0005737">
    <property type="term" value="C:cytoplasm"/>
    <property type="evidence" value="ECO:0000318"/>
    <property type="project" value="GO_Central"/>
</dbReference>
<dbReference type="GO" id="GO:0005868">
    <property type="term" value="C:cytoplasmic dynein complex"/>
    <property type="evidence" value="ECO:0000314"/>
    <property type="project" value="GO_Central"/>
</dbReference>
<dbReference type="GO" id="GO:0120293">
    <property type="term" value="C:dynein axonemal particle"/>
    <property type="evidence" value="ECO:0007669"/>
    <property type="project" value="UniProtKB-SubCell"/>
</dbReference>
<dbReference type="GO" id="GO:0045505">
    <property type="term" value="F:dynein intermediate chain binding"/>
    <property type="evidence" value="ECO:0000353"/>
    <property type="project" value="GO_Central"/>
</dbReference>
<dbReference type="GO" id="GO:0060271">
    <property type="term" value="P:cilium assembly"/>
    <property type="evidence" value="ECO:0000315"/>
    <property type="project" value="GO_Central"/>
</dbReference>
<dbReference type="GO" id="GO:0035721">
    <property type="term" value="P:intraciliary retrograde transport"/>
    <property type="evidence" value="ECO:0000315"/>
    <property type="project" value="UniProtKB"/>
</dbReference>
<dbReference type="GO" id="GO:0007018">
    <property type="term" value="P:microtubule-based movement"/>
    <property type="evidence" value="ECO:0000318"/>
    <property type="project" value="GO_Central"/>
</dbReference>
<dbReference type="GO" id="GO:1902017">
    <property type="term" value="P:regulation of cilium assembly"/>
    <property type="evidence" value="ECO:0000315"/>
    <property type="project" value="GO_Central"/>
</dbReference>
<dbReference type="GO" id="GO:1905799">
    <property type="term" value="P:regulation of intraciliary retrograde transport"/>
    <property type="evidence" value="ECO:0000315"/>
    <property type="project" value="UniProtKB"/>
</dbReference>
<dbReference type="CDD" id="cd21459">
    <property type="entry name" value="DLC-like_TCTEX1D2"/>
    <property type="match status" value="1"/>
</dbReference>
<dbReference type="FunFam" id="3.30.1140.40:FF:000003">
    <property type="entry name" value="tctex1 domain-containing protein 2"/>
    <property type="match status" value="1"/>
</dbReference>
<dbReference type="Gene3D" id="3.30.1140.40">
    <property type="entry name" value="Tctex-1"/>
    <property type="match status" value="1"/>
</dbReference>
<dbReference type="InterPro" id="IPR005334">
    <property type="entry name" value="Tctex-1-like"/>
</dbReference>
<dbReference type="InterPro" id="IPR038586">
    <property type="entry name" value="Tctex-1-like_sf"/>
</dbReference>
<dbReference type="PANTHER" id="PTHR21255:SF7">
    <property type="entry name" value="DYNEIN LIGHT CHAIN TCTEX-TYPE PROTEIN 2B"/>
    <property type="match status" value="1"/>
</dbReference>
<dbReference type="PANTHER" id="PTHR21255">
    <property type="entry name" value="T-COMPLEX-ASSOCIATED-TESTIS-EXPRESSED 1/ DYNEIN LIGHT CHAIN"/>
    <property type="match status" value="1"/>
</dbReference>
<dbReference type="Pfam" id="PF03645">
    <property type="entry name" value="Tctex-1"/>
    <property type="match status" value="1"/>
</dbReference>
<feature type="chain" id="PRO_0000316869" description="Dynein light chain Tctex-type protein 2B">
    <location>
        <begin position="1"/>
        <end position="142"/>
    </location>
</feature>
<feature type="sequence variant" id="VAR_078554" description="In SRTD17." evidence="2">
    <location>
        <begin position="88"/>
        <end position="142"/>
    </location>
</feature>
<feature type="sequence conflict" description="In Ref. 2; AAH21177." evidence="5" ref="2">
    <original>E</original>
    <variation>G</variation>
    <location>
        <position position="55"/>
    </location>
</feature>
<feature type="strand" evidence="7">
    <location>
        <begin position="4"/>
        <end position="11"/>
    </location>
</feature>
<feature type="helix" evidence="7">
    <location>
        <begin position="35"/>
        <end position="37"/>
    </location>
</feature>
<feature type="helix" evidence="7">
    <location>
        <begin position="41"/>
        <end position="56"/>
    </location>
</feature>
<feature type="helix" evidence="7">
    <location>
        <begin position="63"/>
        <end position="65"/>
    </location>
</feature>
<feature type="helix" evidence="7">
    <location>
        <begin position="66"/>
        <end position="81"/>
    </location>
</feature>
<feature type="strand" evidence="7">
    <location>
        <begin position="89"/>
        <end position="99"/>
    </location>
</feature>
<feature type="strand" evidence="7">
    <location>
        <begin position="104"/>
        <end position="113"/>
    </location>
</feature>
<feature type="turn" evidence="7">
    <location>
        <begin position="115"/>
        <end position="117"/>
    </location>
</feature>
<feature type="strand" evidence="7">
    <location>
        <begin position="119"/>
        <end position="126"/>
    </location>
</feature>
<feature type="strand" evidence="7">
    <location>
        <begin position="128"/>
        <end position="140"/>
    </location>
</feature>
<organism>
    <name type="scientific">Homo sapiens</name>
    <name type="common">Human</name>
    <dbReference type="NCBI Taxonomy" id="9606"/>
    <lineage>
        <taxon>Eukaryota</taxon>
        <taxon>Metazoa</taxon>
        <taxon>Chordata</taxon>
        <taxon>Craniata</taxon>
        <taxon>Vertebrata</taxon>
        <taxon>Euteleostomi</taxon>
        <taxon>Mammalia</taxon>
        <taxon>Eutheria</taxon>
        <taxon>Euarchontoglires</taxon>
        <taxon>Primates</taxon>
        <taxon>Haplorrhini</taxon>
        <taxon>Catarrhini</taxon>
        <taxon>Hominidae</taxon>
        <taxon>Homo</taxon>
    </lineage>
</organism>
<keyword id="KW-0002">3D-structure</keyword>
<keyword id="KW-1186">Ciliopathy</keyword>
<keyword id="KW-0963">Cytoplasm</keyword>
<keyword id="KW-0225">Disease variant</keyword>
<keyword id="KW-1267">Proteomics identification</keyword>
<keyword id="KW-1185">Reference proteome</keyword>